<evidence type="ECO:0000255" key="1">
    <source>
        <dbReference type="HAMAP-Rule" id="MF_01151"/>
    </source>
</evidence>
<evidence type="ECO:0000256" key="2">
    <source>
        <dbReference type="SAM" id="MobiDB-lite"/>
    </source>
</evidence>
<sequence>MTDTPPENEEQHESNVQNENEVEHLQQEIVTLKTELKEKNDKYLMALAESENSRKRLQKERQELMQYALENTLIDFLNPIESMEKALGFATQMSDDVKNWALGFNMILNQFKQIFEEKGIIEYSSIGQKFNPFLHEAVQTEETSEVPEGTILEEFAKGYKIGERPIRVAKVKVAKAPTPKENKE</sequence>
<keyword id="KW-0143">Chaperone</keyword>
<keyword id="KW-0963">Cytoplasm</keyword>
<keyword id="KW-0346">Stress response</keyword>
<accession>Q9Z849</accession>
<accession>Q9JQ66</accession>
<organism>
    <name type="scientific">Chlamydia pneumoniae</name>
    <name type="common">Chlamydophila pneumoniae</name>
    <dbReference type="NCBI Taxonomy" id="83558"/>
    <lineage>
        <taxon>Bacteria</taxon>
        <taxon>Pseudomonadati</taxon>
        <taxon>Chlamydiota</taxon>
        <taxon>Chlamydiia</taxon>
        <taxon>Chlamydiales</taxon>
        <taxon>Chlamydiaceae</taxon>
        <taxon>Chlamydia/Chlamydophila group</taxon>
        <taxon>Chlamydia</taxon>
    </lineage>
</organism>
<name>GRPE_CHLPN</name>
<gene>
    <name evidence="1" type="primary">grpE</name>
    <name type="ordered locus">CPn_0502</name>
    <name type="ordered locus">CP_0252</name>
    <name type="ordered locus">CPj0502</name>
    <name type="ordered locus">CpB0522</name>
</gene>
<proteinExistence type="inferred from homology"/>
<reference key="1">
    <citation type="journal article" date="1999" name="Nat. Genet.">
        <title>Comparative genomes of Chlamydia pneumoniae and C. trachomatis.</title>
        <authorList>
            <person name="Kalman S."/>
            <person name="Mitchell W.P."/>
            <person name="Marathe R."/>
            <person name="Lammel C.J."/>
            <person name="Fan J."/>
            <person name="Hyman R.W."/>
            <person name="Olinger L."/>
            <person name="Grimwood J."/>
            <person name="Davis R.W."/>
            <person name="Stephens R.S."/>
        </authorList>
    </citation>
    <scope>NUCLEOTIDE SEQUENCE [LARGE SCALE GENOMIC DNA]</scope>
    <source>
        <strain>CWL029</strain>
    </source>
</reference>
<reference key="2">
    <citation type="journal article" date="2000" name="Nucleic Acids Res.">
        <title>Genome sequences of Chlamydia trachomatis MoPn and Chlamydia pneumoniae AR39.</title>
        <authorList>
            <person name="Read T.D."/>
            <person name="Brunham R.C."/>
            <person name="Shen C."/>
            <person name="Gill S.R."/>
            <person name="Heidelberg J.F."/>
            <person name="White O."/>
            <person name="Hickey E.K."/>
            <person name="Peterson J.D."/>
            <person name="Utterback T.R."/>
            <person name="Berry K.J."/>
            <person name="Bass S."/>
            <person name="Linher K.D."/>
            <person name="Weidman J.F."/>
            <person name="Khouri H.M."/>
            <person name="Craven B."/>
            <person name="Bowman C."/>
            <person name="Dodson R.J."/>
            <person name="Gwinn M.L."/>
            <person name="Nelson W.C."/>
            <person name="DeBoy R.T."/>
            <person name="Kolonay J.F."/>
            <person name="McClarty G."/>
            <person name="Salzberg S.L."/>
            <person name="Eisen J.A."/>
            <person name="Fraser C.M."/>
        </authorList>
    </citation>
    <scope>NUCLEOTIDE SEQUENCE [LARGE SCALE GENOMIC DNA]</scope>
    <source>
        <strain>AR39</strain>
    </source>
</reference>
<reference key="3">
    <citation type="journal article" date="2000" name="Nucleic Acids Res.">
        <title>Comparison of whole genome sequences of Chlamydia pneumoniae J138 from Japan and CWL029 from USA.</title>
        <authorList>
            <person name="Shirai M."/>
            <person name="Hirakawa H."/>
            <person name="Kimoto M."/>
            <person name="Tabuchi M."/>
            <person name="Kishi F."/>
            <person name="Ouchi K."/>
            <person name="Shiba T."/>
            <person name="Ishii K."/>
            <person name="Hattori M."/>
            <person name="Kuhara S."/>
            <person name="Nakazawa T."/>
        </authorList>
    </citation>
    <scope>NUCLEOTIDE SEQUENCE [LARGE SCALE GENOMIC DNA]</scope>
    <source>
        <strain>J138</strain>
    </source>
</reference>
<reference key="4">
    <citation type="submission" date="2002-05" db="EMBL/GenBank/DDBJ databases">
        <title>The genome sequence of Chlamydia pneumoniae TW183 and comparison with other Chlamydia strains based on whole genome sequence analysis.</title>
        <authorList>
            <person name="Geng M.M."/>
            <person name="Schuhmacher A."/>
            <person name="Muehldorfer I."/>
            <person name="Bensch K.W."/>
            <person name="Schaefer K.P."/>
            <person name="Schneider S."/>
            <person name="Pohl T."/>
            <person name="Essig A."/>
            <person name="Marre R."/>
            <person name="Melchers K."/>
        </authorList>
    </citation>
    <scope>NUCLEOTIDE SEQUENCE [LARGE SCALE GENOMIC DNA]</scope>
    <source>
        <strain>TW-183</strain>
    </source>
</reference>
<feature type="chain" id="PRO_0000113769" description="Protein GrpE">
    <location>
        <begin position="1"/>
        <end position="184"/>
    </location>
</feature>
<feature type="region of interest" description="Disordered" evidence="2">
    <location>
        <begin position="1"/>
        <end position="22"/>
    </location>
</feature>
<feature type="compositionally biased region" description="Acidic residues" evidence="2">
    <location>
        <begin position="1"/>
        <end position="10"/>
    </location>
</feature>
<dbReference type="EMBL" id="AE001363">
    <property type="protein sequence ID" value="AAD18642.1"/>
    <property type="molecule type" value="Genomic_DNA"/>
</dbReference>
<dbReference type="EMBL" id="AE002161">
    <property type="protein sequence ID" value="AAF38115.1"/>
    <property type="molecule type" value="Genomic_DNA"/>
</dbReference>
<dbReference type="EMBL" id="BA000008">
    <property type="protein sequence ID" value="BAA98708.1"/>
    <property type="molecule type" value="Genomic_DNA"/>
</dbReference>
<dbReference type="EMBL" id="AE009440">
    <property type="protein sequence ID" value="AAP98451.1"/>
    <property type="molecule type" value="Genomic_DNA"/>
</dbReference>
<dbReference type="PIR" id="B86553">
    <property type="entry name" value="B86553"/>
</dbReference>
<dbReference type="PIR" id="H72070">
    <property type="entry name" value="H72070"/>
</dbReference>
<dbReference type="RefSeq" id="NP_224698.1">
    <property type="nucleotide sequence ID" value="NC_000922.1"/>
</dbReference>
<dbReference type="RefSeq" id="WP_010883140.1">
    <property type="nucleotide sequence ID" value="NZ_LN847257.1"/>
</dbReference>
<dbReference type="SMR" id="Q9Z849"/>
<dbReference type="STRING" id="406984.CPK_ORF01018"/>
<dbReference type="GeneID" id="45050545"/>
<dbReference type="KEGG" id="cpa:CP_0252"/>
<dbReference type="KEGG" id="cpj:grpE"/>
<dbReference type="KEGG" id="cpn:CPn_0502"/>
<dbReference type="KEGG" id="cpt:CpB0522"/>
<dbReference type="PATRIC" id="fig|115713.3.peg.561"/>
<dbReference type="eggNOG" id="COG0576">
    <property type="taxonomic scope" value="Bacteria"/>
</dbReference>
<dbReference type="HOGENOM" id="CLU_057217_5_2_0"/>
<dbReference type="OrthoDB" id="9812586at2"/>
<dbReference type="Proteomes" id="UP000000583">
    <property type="component" value="Chromosome"/>
</dbReference>
<dbReference type="Proteomes" id="UP000000801">
    <property type="component" value="Chromosome"/>
</dbReference>
<dbReference type="GO" id="GO:0005737">
    <property type="term" value="C:cytoplasm"/>
    <property type="evidence" value="ECO:0007669"/>
    <property type="project" value="UniProtKB-SubCell"/>
</dbReference>
<dbReference type="GO" id="GO:0000774">
    <property type="term" value="F:adenyl-nucleotide exchange factor activity"/>
    <property type="evidence" value="ECO:0007669"/>
    <property type="project" value="InterPro"/>
</dbReference>
<dbReference type="GO" id="GO:0042803">
    <property type="term" value="F:protein homodimerization activity"/>
    <property type="evidence" value="ECO:0007669"/>
    <property type="project" value="InterPro"/>
</dbReference>
<dbReference type="GO" id="GO:0051087">
    <property type="term" value="F:protein-folding chaperone binding"/>
    <property type="evidence" value="ECO:0007669"/>
    <property type="project" value="InterPro"/>
</dbReference>
<dbReference type="GO" id="GO:0051082">
    <property type="term" value="F:unfolded protein binding"/>
    <property type="evidence" value="ECO:0007669"/>
    <property type="project" value="TreeGrafter"/>
</dbReference>
<dbReference type="GO" id="GO:0006457">
    <property type="term" value="P:protein folding"/>
    <property type="evidence" value="ECO:0007669"/>
    <property type="project" value="InterPro"/>
</dbReference>
<dbReference type="CDD" id="cd00446">
    <property type="entry name" value="GrpE"/>
    <property type="match status" value="1"/>
</dbReference>
<dbReference type="FunFam" id="2.30.22.10:FF:000001">
    <property type="entry name" value="Protein GrpE"/>
    <property type="match status" value="1"/>
</dbReference>
<dbReference type="Gene3D" id="3.90.20.20">
    <property type="match status" value="1"/>
</dbReference>
<dbReference type="Gene3D" id="2.30.22.10">
    <property type="entry name" value="Head domain of nucleotide exchange factor GrpE"/>
    <property type="match status" value="1"/>
</dbReference>
<dbReference type="HAMAP" id="MF_01151">
    <property type="entry name" value="GrpE"/>
    <property type="match status" value="1"/>
</dbReference>
<dbReference type="InterPro" id="IPR000740">
    <property type="entry name" value="GrpE"/>
</dbReference>
<dbReference type="InterPro" id="IPR013805">
    <property type="entry name" value="GrpE_coiled_coil"/>
</dbReference>
<dbReference type="InterPro" id="IPR009012">
    <property type="entry name" value="GrpE_head"/>
</dbReference>
<dbReference type="PANTHER" id="PTHR21237">
    <property type="entry name" value="GRPE PROTEIN"/>
    <property type="match status" value="1"/>
</dbReference>
<dbReference type="PANTHER" id="PTHR21237:SF23">
    <property type="entry name" value="GRPE PROTEIN HOMOLOG, MITOCHONDRIAL"/>
    <property type="match status" value="1"/>
</dbReference>
<dbReference type="Pfam" id="PF01025">
    <property type="entry name" value="GrpE"/>
    <property type="match status" value="1"/>
</dbReference>
<dbReference type="PRINTS" id="PR00773">
    <property type="entry name" value="GRPEPROTEIN"/>
</dbReference>
<dbReference type="SUPFAM" id="SSF58014">
    <property type="entry name" value="Coiled-coil domain of nucleotide exchange factor GrpE"/>
    <property type="match status" value="1"/>
</dbReference>
<dbReference type="SUPFAM" id="SSF51064">
    <property type="entry name" value="Head domain of nucleotide exchange factor GrpE"/>
    <property type="match status" value="1"/>
</dbReference>
<dbReference type="PROSITE" id="PS01071">
    <property type="entry name" value="GRPE"/>
    <property type="match status" value="1"/>
</dbReference>
<protein>
    <recommendedName>
        <fullName evidence="1">Protein GrpE</fullName>
    </recommendedName>
    <alternativeName>
        <fullName evidence="1">HSP-70 cofactor</fullName>
    </alternativeName>
</protein>
<comment type="function">
    <text evidence="1">Participates actively in the response to hyperosmotic and heat shock by preventing the aggregation of stress-denatured proteins, in association with DnaK and GrpE. It is the nucleotide exchange factor for DnaK and may function as a thermosensor. Unfolded proteins bind initially to DnaJ; upon interaction with the DnaJ-bound protein, DnaK hydrolyzes its bound ATP, resulting in the formation of a stable complex. GrpE releases ADP from DnaK; ATP binding to DnaK triggers the release of the substrate protein, thus completing the reaction cycle. Several rounds of ATP-dependent interactions between DnaJ, DnaK and GrpE are required for fully efficient folding.</text>
</comment>
<comment type="subunit">
    <text evidence="1">Homodimer.</text>
</comment>
<comment type="subcellular location">
    <subcellularLocation>
        <location evidence="1">Cytoplasm</location>
    </subcellularLocation>
</comment>
<comment type="similarity">
    <text evidence="1">Belongs to the GrpE family.</text>
</comment>